<keyword id="KW-1185">Reference proteome</keyword>
<reference key="1">
    <citation type="submission" date="1996-08" db="EMBL/GenBank/DDBJ databases">
        <title>Sequencing of a 26 kb region of the Bacillus subtilis genome downstream of spoVJ.</title>
        <authorList>
            <person name="Borchert S."/>
            <person name="Klein C."/>
            <person name="Piksa B."/>
            <person name="Hammelmann M."/>
            <person name="Entian K.-D."/>
        </authorList>
    </citation>
    <scope>NUCLEOTIDE SEQUENCE [GENOMIC DNA]</scope>
</reference>
<reference key="2">
    <citation type="journal article" date="1997" name="Nature">
        <title>The complete genome sequence of the Gram-positive bacterium Bacillus subtilis.</title>
        <authorList>
            <person name="Kunst F."/>
            <person name="Ogasawara N."/>
            <person name="Moszer I."/>
            <person name="Albertini A.M."/>
            <person name="Alloni G."/>
            <person name="Azevedo V."/>
            <person name="Bertero M.G."/>
            <person name="Bessieres P."/>
            <person name="Bolotin A."/>
            <person name="Borchert S."/>
            <person name="Borriss R."/>
            <person name="Boursier L."/>
            <person name="Brans A."/>
            <person name="Braun M."/>
            <person name="Brignell S.C."/>
            <person name="Bron S."/>
            <person name="Brouillet S."/>
            <person name="Bruschi C.V."/>
            <person name="Caldwell B."/>
            <person name="Capuano V."/>
            <person name="Carter N.M."/>
            <person name="Choi S.-K."/>
            <person name="Codani J.-J."/>
            <person name="Connerton I.F."/>
            <person name="Cummings N.J."/>
            <person name="Daniel R.A."/>
            <person name="Denizot F."/>
            <person name="Devine K.M."/>
            <person name="Duesterhoeft A."/>
            <person name="Ehrlich S.D."/>
            <person name="Emmerson P.T."/>
            <person name="Entian K.-D."/>
            <person name="Errington J."/>
            <person name="Fabret C."/>
            <person name="Ferrari E."/>
            <person name="Foulger D."/>
            <person name="Fritz C."/>
            <person name="Fujita M."/>
            <person name="Fujita Y."/>
            <person name="Fuma S."/>
            <person name="Galizzi A."/>
            <person name="Galleron N."/>
            <person name="Ghim S.-Y."/>
            <person name="Glaser P."/>
            <person name="Goffeau A."/>
            <person name="Golightly E.J."/>
            <person name="Grandi G."/>
            <person name="Guiseppi G."/>
            <person name="Guy B.J."/>
            <person name="Haga K."/>
            <person name="Haiech J."/>
            <person name="Harwood C.R."/>
            <person name="Henaut A."/>
            <person name="Hilbert H."/>
            <person name="Holsappel S."/>
            <person name="Hosono S."/>
            <person name="Hullo M.-F."/>
            <person name="Itaya M."/>
            <person name="Jones L.-M."/>
            <person name="Joris B."/>
            <person name="Karamata D."/>
            <person name="Kasahara Y."/>
            <person name="Klaerr-Blanchard M."/>
            <person name="Klein C."/>
            <person name="Kobayashi Y."/>
            <person name="Koetter P."/>
            <person name="Koningstein G."/>
            <person name="Krogh S."/>
            <person name="Kumano M."/>
            <person name="Kurita K."/>
            <person name="Lapidus A."/>
            <person name="Lardinois S."/>
            <person name="Lauber J."/>
            <person name="Lazarevic V."/>
            <person name="Lee S.-M."/>
            <person name="Levine A."/>
            <person name="Liu H."/>
            <person name="Masuda S."/>
            <person name="Mauel C."/>
            <person name="Medigue C."/>
            <person name="Medina N."/>
            <person name="Mellado R.P."/>
            <person name="Mizuno M."/>
            <person name="Moestl D."/>
            <person name="Nakai S."/>
            <person name="Noback M."/>
            <person name="Noone D."/>
            <person name="O'Reilly M."/>
            <person name="Ogawa K."/>
            <person name="Ogiwara A."/>
            <person name="Oudega B."/>
            <person name="Park S.-H."/>
            <person name="Parro V."/>
            <person name="Pohl T.M."/>
            <person name="Portetelle D."/>
            <person name="Porwollik S."/>
            <person name="Prescott A.M."/>
            <person name="Presecan E."/>
            <person name="Pujic P."/>
            <person name="Purnelle B."/>
            <person name="Rapoport G."/>
            <person name="Rey M."/>
            <person name="Reynolds S."/>
            <person name="Rieger M."/>
            <person name="Rivolta C."/>
            <person name="Rocha E."/>
            <person name="Roche B."/>
            <person name="Rose M."/>
            <person name="Sadaie Y."/>
            <person name="Sato T."/>
            <person name="Scanlan E."/>
            <person name="Schleich S."/>
            <person name="Schroeter R."/>
            <person name="Scoffone F."/>
            <person name="Sekiguchi J."/>
            <person name="Sekowska A."/>
            <person name="Seror S.J."/>
            <person name="Serror P."/>
            <person name="Shin B.-S."/>
            <person name="Soldo B."/>
            <person name="Sorokin A."/>
            <person name="Tacconi E."/>
            <person name="Takagi T."/>
            <person name="Takahashi H."/>
            <person name="Takemaru K."/>
            <person name="Takeuchi M."/>
            <person name="Tamakoshi A."/>
            <person name="Tanaka T."/>
            <person name="Terpstra P."/>
            <person name="Tognoni A."/>
            <person name="Tosato V."/>
            <person name="Uchiyama S."/>
            <person name="Vandenbol M."/>
            <person name="Vannier F."/>
            <person name="Vassarotti A."/>
            <person name="Viari A."/>
            <person name="Wambutt R."/>
            <person name="Wedler E."/>
            <person name="Wedler H."/>
            <person name="Weitzenegger T."/>
            <person name="Winters P."/>
            <person name="Wipat A."/>
            <person name="Yamamoto H."/>
            <person name="Yamane K."/>
            <person name="Yasumoto K."/>
            <person name="Yata K."/>
            <person name="Yoshida K."/>
            <person name="Yoshikawa H.-F."/>
            <person name="Zumstein E."/>
            <person name="Yoshikawa H."/>
            <person name="Danchin A."/>
        </authorList>
    </citation>
    <scope>NUCLEOTIDE SEQUENCE [LARGE SCALE GENOMIC DNA]</scope>
    <source>
        <strain>168</strain>
    </source>
</reference>
<protein>
    <recommendedName>
        <fullName>Uncharacterized protein YnaF</fullName>
    </recommendedName>
</protein>
<proteinExistence type="predicted"/>
<gene>
    <name type="primary">ynaF</name>
    <name type="ordered locus">BSU17540</name>
</gene>
<accession>P94484</accession>
<accession>Q796H6</accession>
<dbReference type="EMBL" id="U66480">
    <property type="protein sequence ID" value="AAB41086.1"/>
    <property type="molecule type" value="Genomic_DNA"/>
</dbReference>
<dbReference type="EMBL" id="AL009126">
    <property type="protein sequence ID" value="CAB13638.1"/>
    <property type="molecule type" value="Genomic_DNA"/>
</dbReference>
<dbReference type="PIR" id="F69887">
    <property type="entry name" value="F69887"/>
</dbReference>
<dbReference type="RefSeq" id="NP_389636.1">
    <property type="nucleotide sequence ID" value="NC_000964.3"/>
</dbReference>
<dbReference type="RefSeq" id="WP_003245740.1">
    <property type="nucleotide sequence ID" value="NZ_OZ025638.1"/>
</dbReference>
<dbReference type="FunCoup" id="P94484">
    <property type="interactions" value="30"/>
</dbReference>
<dbReference type="STRING" id="224308.BSU17540"/>
<dbReference type="PaxDb" id="224308-BSU17540"/>
<dbReference type="EnsemblBacteria" id="CAB13638">
    <property type="protein sequence ID" value="CAB13638"/>
    <property type="gene ID" value="BSU_17540"/>
</dbReference>
<dbReference type="GeneID" id="938101"/>
<dbReference type="KEGG" id="bsu:BSU17540"/>
<dbReference type="PATRIC" id="fig|224308.179.peg.1903"/>
<dbReference type="eggNOG" id="ENOG5030E2I">
    <property type="taxonomic scope" value="Bacteria"/>
</dbReference>
<dbReference type="InParanoid" id="P94484"/>
<dbReference type="OrthoDB" id="2894561at2"/>
<dbReference type="BioCyc" id="BSUB:BSU17540-MONOMER"/>
<dbReference type="Proteomes" id="UP000001570">
    <property type="component" value="Chromosome"/>
</dbReference>
<sequence>MVLCDDERSAFLLVLDERLVDFDSQGGNHISVYLVTHFELSDQSYKDVLSFNDDLLGMEHNCSYAMDILSVKEELDFDFPFNMLAIKSYVQELIKMLGIDITLPEMKERDFDKLSQN</sequence>
<feature type="chain" id="PRO_0000360448" description="Uncharacterized protein YnaF">
    <location>
        <begin position="1"/>
        <end position="117"/>
    </location>
</feature>
<name>YNAF_BACSU</name>
<organism>
    <name type="scientific">Bacillus subtilis (strain 168)</name>
    <dbReference type="NCBI Taxonomy" id="224308"/>
    <lineage>
        <taxon>Bacteria</taxon>
        <taxon>Bacillati</taxon>
        <taxon>Bacillota</taxon>
        <taxon>Bacilli</taxon>
        <taxon>Bacillales</taxon>
        <taxon>Bacillaceae</taxon>
        <taxon>Bacillus</taxon>
    </lineage>
</organism>